<sequence>MTESVLDYMTRLGRAAREASRVIGRASTAQKNRALQAAADALDAARAELAAANELDLAAGRASGLEPALLDRLALTPARIDGMITGLRQVASLPDPVGAIRDMSYRPSGIQVGKMRTPLGVIGIIYESRPNVTIDAASLCLKSGNATILRGGSEAIHSNRAIATCIQRGLAEAGLPAAVVQVVETTDREAVGALISMPEFVDVIVPRGGRGLIERISRDARVPVIKHLDGICHIYVSQHADLDKAWNVAFNAKTYRYGICGAMETLLVDQQVAERFLPEMARRFVEKGVELRGCERTQAIISAKPATEADWHTEYLDAILSIRVVDGLNQAIDHINHYGSHHTDSIISEHQGEARQFMAEVDSASVMLNTPTCFADGFEYGLGAEIGISTDKLHARGPVGLEGLTCEKYVVIGDGQLRGQGSC</sequence>
<evidence type="ECO:0000255" key="1">
    <source>
        <dbReference type="HAMAP-Rule" id="MF_00412"/>
    </source>
</evidence>
<reference key="1">
    <citation type="submission" date="2007-05" db="EMBL/GenBank/DDBJ databases">
        <title>Complete sequence of Pseudomonas putida F1.</title>
        <authorList>
            <consortium name="US DOE Joint Genome Institute"/>
            <person name="Copeland A."/>
            <person name="Lucas S."/>
            <person name="Lapidus A."/>
            <person name="Barry K."/>
            <person name="Detter J.C."/>
            <person name="Glavina del Rio T."/>
            <person name="Hammon N."/>
            <person name="Israni S."/>
            <person name="Dalin E."/>
            <person name="Tice H."/>
            <person name="Pitluck S."/>
            <person name="Chain P."/>
            <person name="Malfatti S."/>
            <person name="Shin M."/>
            <person name="Vergez L."/>
            <person name="Schmutz J."/>
            <person name="Larimer F."/>
            <person name="Land M."/>
            <person name="Hauser L."/>
            <person name="Kyrpides N."/>
            <person name="Lykidis A."/>
            <person name="Parales R."/>
            <person name="Richardson P."/>
        </authorList>
    </citation>
    <scope>NUCLEOTIDE SEQUENCE [LARGE SCALE GENOMIC DNA]</scope>
    <source>
        <strain>ATCC 700007 / DSM 6899 / JCM 31910 / BCRC 17059 / LMG 24140 / F1</strain>
    </source>
</reference>
<dbReference type="EC" id="1.2.1.41" evidence="1"/>
<dbReference type="EMBL" id="CP000712">
    <property type="protein sequence ID" value="ABQ80806.1"/>
    <property type="molecule type" value="Genomic_DNA"/>
</dbReference>
<dbReference type="SMR" id="A5W9J6"/>
<dbReference type="KEGG" id="ppf:Pput_4686"/>
<dbReference type="eggNOG" id="COG0014">
    <property type="taxonomic scope" value="Bacteria"/>
</dbReference>
<dbReference type="HOGENOM" id="CLU_030231_0_0_6"/>
<dbReference type="UniPathway" id="UPA00098">
    <property type="reaction ID" value="UER00360"/>
</dbReference>
<dbReference type="GO" id="GO:0005737">
    <property type="term" value="C:cytoplasm"/>
    <property type="evidence" value="ECO:0007669"/>
    <property type="project" value="UniProtKB-SubCell"/>
</dbReference>
<dbReference type="GO" id="GO:0004350">
    <property type="term" value="F:glutamate-5-semialdehyde dehydrogenase activity"/>
    <property type="evidence" value="ECO:0007669"/>
    <property type="project" value="UniProtKB-UniRule"/>
</dbReference>
<dbReference type="GO" id="GO:0050661">
    <property type="term" value="F:NADP binding"/>
    <property type="evidence" value="ECO:0007669"/>
    <property type="project" value="InterPro"/>
</dbReference>
<dbReference type="GO" id="GO:0055129">
    <property type="term" value="P:L-proline biosynthetic process"/>
    <property type="evidence" value="ECO:0007669"/>
    <property type="project" value="UniProtKB-UniRule"/>
</dbReference>
<dbReference type="CDD" id="cd07079">
    <property type="entry name" value="ALDH_F18-19_ProA-GPR"/>
    <property type="match status" value="1"/>
</dbReference>
<dbReference type="FunFam" id="3.40.309.10:FF:000006">
    <property type="entry name" value="Gamma-glutamyl phosphate reductase"/>
    <property type="match status" value="1"/>
</dbReference>
<dbReference type="Gene3D" id="3.40.605.10">
    <property type="entry name" value="Aldehyde Dehydrogenase, Chain A, domain 1"/>
    <property type="match status" value="1"/>
</dbReference>
<dbReference type="Gene3D" id="3.40.309.10">
    <property type="entry name" value="Aldehyde Dehydrogenase, Chain A, domain 2"/>
    <property type="match status" value="1"/>
</dbReference>
<dbReference type="HAMAP" id="MF_00412">
    <property type="entry name" value="ProA"/>
    <property type="match status" value="1"/>
</dbReference>
<dbReference type="InterPro" id="IPR016161">
    <property type="entry name" value="Ald_DH/histidinol_DH"/>
</dbReference>
<dbReference type="InterPro" id="IPR016163">
    <property type="entry name" value="Ald_DH_C"/>
</dbReference>
<dbReference type="InterPro" id="IPR016162">
    <property type="entry name" value="Ald_DH_N"/>
</dbReference>
<dbReference type="InterPro" id="IPR015590">
    <property type="entry name" value="Aldehyde_DH_dom"/>
</dbReference>
<dbReference type="InterPro" id="IPR020593">
    <property type="entry name" value="G-glutamylP_reductase_CS"/>
</dbReference>
<dbReference type="InterPro" id="IPR012134">
    <property type="entry name" value="Glu-5-SA_DH"/>
</dbReference>
<dbReference type="InterPro" id="IPR000965">
    <property type="entry name" value="GPR_dom"/>
</dbReference>
<dbReference type="NCBIfam" id="NF001221">
    <property type="entry name" value="PRK00197.1"/>
    <property type="match status" value="1"/>
</dbReference>
<dbReference type="NCBIfam" id="TIGR00407">
    <property type="entry name" value="proA"/>
    <property type="match status" value="1"/>
</dbReference>
<dbReference type="PANTHER" id="PTHR11063:SF8">
    <property type="entry name" value="DELTA-1-PYRROLINE-5-CARBOXYLATE SYNTHASE"/>
    <property type="match status" value="1"/>
</dbReference>
<dbReference type="PANTHER" id="PTHR11063">
    <property type="entry name" value="GLUTAMATE SEMIALDEHYDE DEHYDROGENASE"/>
    <property type="match status" value="1"/>
</dbReference>
<dbReference type="Pfam" id="PF00171">
    <property type="entry name" value="Aldedh"/>
    <property type="match status" value="1"/>
</dbReference>
<dbReference type="PIRSF" id="PIRSF000151">
    <property type="entry name" value="GPR"/>
    <property type="match status" value="1"/>
</dbReference>
<dbReference type="SUPFAM" id="SSF53720">
    <property type="entry name" value="ALDH-like"/>
    <property type="match status" value="1"/>
</dbReference>
<dbReference type="PROSITE" id="PS01223">
    <property type="entry name" value="PROA"/>
    <property type="match status" value="1"/>
</dbReference>
<name>PROA_PSEP1</name>
<gene>
    <name evidence="1" type="primary">proA</name>
    <name type="ordered locus">Pput_4686</name>
</gene>
<feature type="chain" id="PRO_1000049985" description="Gamma-glutamyl phosphate reductase">
    <location>
        <begin position="1"/>
        <end position="423"/>
    </location>
</feature>
<accession>A5W9J6</accession>
<proteinExistence type="inferred from homology"/>
<organism>
    <name type="scientific">Pseudomonas putida (strain ATCC 700007 / DSM 6899 / JCM 31910 / BCRC 17059 / LMG 24140 / F1)</name>
    <dbReference type="NCBI Taxonomy" id="351746"/>
    <lineage>
        <taxon>Bacteria</taxon>
        <taxon>Pseudomonadati</taxon>
        <taxon>Pseudomonadota</taxon>
        <taxon>Gammaproteobacteria</taxon>
        <taxon>Pseudomonadales</taxon>
        <taxon>Pseudomonadaceae</taxon>
        <taxon>Pseudomonas</taxon>
    </lineage>
</organism>
<protein>
    <recommendedName>
        <fullName evidence="1">Gamma-glutamyl phosphate reductase</fullName>
        <shortName evidence="1">GPR</shortName>
        <ecNumber evidence="1">1.2.1.41</ecNumber>
    </recommendedName>
    <alternativeName>
        <fullName evidence="1">Glutamate-5-semialdehyde dehydrogenase</fullName>
    </alternativeName>
    <alternativeName>
        <fullName evidence="1">Glutamyl-gamma-semialdehyde dehydrogenase</fullName>
        <shortName evidence="1">GSA dehydrogenase</shortName>
    </alternativeName>
</protein>
<comment type="function">
    <text evidence="1">Catalyzes the NADPH-dependent reduction of L-glutamate 5-phosphate into L-glutamate 5-semialdehyde and phosphate. The product spontaneously undergoes cyclization to form 1-pyrroline-5-carboxylate.</text>
</comment>
<comment type="catalytic activity">
    <reaction evidence="1">
        <text>L-glutamate 5-semialdehyde + phosphate + NADP(+) = L-glutamyl 5-phosphate + NADPH + H(+)</text>
        <dbReference type="Rhea" id="RHEA:19541"/>
        <dbReference type="ChEBI" id="CHEBI:15378"/>
        <dbReference type="ChEBI" id="CHEBI:43474"/>
        <dbReference type="ChEBI" id="CHEBI:57783"/>
        <dbReference type="ChEBI" id="CHEBI:58066"/>
        <dbReference type="ChEBI" id="CHEBI:58274"/>
        <dbReference type="ChEBI" id="CHEBI:58349"/>
        <dbReference type="EC" id="1.2.1.41"/>
    </reaction>
</comment>
<comment type="pathway">
    <text evidence="1">Amino-acid biosynthesis; L-proline biosynthesis; L-glutamate 5-semialdehyde from L-glutamate: step 2/2.</text>
</comment>
<comment type="subcellular location">
    <subcellularLocation>
        <location evidence="1">Cytoplasm</location>
    </subcellularLocation>
</comment>
<comment type="similarity">
    <text evidence="1">Belongs to the gamma-glutamyl phosphate reductase family.</text>
</comment>
<keyword id="KW-0028">Amino-acid biosynthesis</keyword>
<keyword id="KW-0963">Cytoplasm</keyword>
<keyword id="KW-0521">NADP</keyword>
<keyword id="KW-0560">Oxidoreductase</keyword>
<keyword id="KW-0641">Proline biosynthesis</keyword>